<name>CDO1_HUMAN</name>
<comment type="function">
    <text evidence="4">Catalyzes the oxidation of cysteine to cysteine sulfinic acid with addition of molecular dioxygen.</text>
</comment>
<comment type="catalytic activity">
    <reaction evidence="4">
        <text>L-cysteine + O2 = 3-sulfino-L-alanine + H(+)</text>
        <dbReference type="Rhea" id="RHEA:20441"/>
        <dbReference type="ChEBI" id="CHEBI:15378"/>
        <dbReference type="ChEBI" id="CHEBI:15379"/>
        <dbReference type="ChEBI" id="CHEBI:35235"/>
        <dbReference type="ChEBI" id="CHEBI:61085"/>
        <dbReference type="EC" id="1.13.11.20"/>
    </reaction>
    <physiologicalReaction direction="left-to-right" evidence="8">
        <dbReference type="Rhea" id="RHEA:20442"/>
    </physiologicalReaction>
</comment>
<comment type="cofactor">
    <cofactor evidence="4">
        <name>Fe(2+)</name>
        <dbReference type="ChEBI" id="CHEBI:29033"/>
    </cofactor>
    <cofactor evidence="1">
        <name>Ni(2+)</name>
        <dbReference type="ChEBI" id="CHEBI:49786"/>
    </cofactor>
    <cofactor evidence="4">
        <name>Zn(2+)</name>
        <dbReference type="ChEBI" id="CHEBI:29105"/>
    </cofactor>
    <text evidence="1 4">Binds 1 Fe(2+) cation per subunit. Zn(2+) can be used to a much lesser extent (PubMed:17135237). Ni(2+) can be used to a lesser extent (By similarity).</text>
</comment>
<comment type="biophysicochemical properties">
    <kinetics>
        <KM evidence="4">3.1 mM for L-cysteine</KM>
    </kinetics>
</comment>
<comment type="pathway">
    <text>Organosulfur biosynthesis; taurine biosynthesis; hypotaurine from L-cysteine: step 1/2.</text>
</comment>
<comment type="subunit">
    <text evidence="4">Monomer.</text>
</comment>
<comment type="tissue specificity">
    <text evidence="2">Highly expressed in liver and placenta. Low expression in heart, brain and pancreas. Also detected in hepatoblastoma Hep-G2 cells.</text>
</comment>
<comment type="induction">
    <text evidence="2">In hepatoblastoma Hep-G2 cells, down-regulated by phorbol 12-myristate 13-acetate (PMA).</text>
</comment>
<comment type="PTM">
    <text evidence="4">The thioether cross-link between Cys-93 and Tyr-157 plays a structural role through stabilizing the Fe(2+) ion, and prevents the production of highly damaging free hydroxyl radicals by holding the oxygen radical via hydroxyl hydrogen.</text>
</comment>
<comment type="similarity">
    <text evidence="7">Belongs to the cysteine dioxygenase family.</text>
</comment>
<dbReference type="EC" id="1.13.11.20" evidence="4"/>
<dbReference type="EMBL" id="Z31357">
    <property type="protein sequence ID" value="CAA83234.1"/>
    <property type="molecule type" value="mRNA"/>
</dbReference>
<dbReference type="EMBL" id="Z23010">
    <property type="protein sequence ID" value="CAA80552.1"/>
    <property type="molecule type" value="mRNA"/>
</dbReference>
<dbReference type="EMBL" id="D85782">
    <property type="protein sequence ID" value="BAA12873.1"/>
    <property type="molecule type" value="Genomic_DNA"/>
</dbReference>
<dbReference type="EMBL" id="D85777">
    <property type="protein sequence ID" value="BAA12872.1"/>
    <property type="molecule type" value="mRNA"/>
</dbReference>
<dbReference type="EMBL" id="AK314231">
    <property type="protein sequence ID" value="BAG36901.1"/>
    <property type="molecule type" value="mRNA"/>
</dbReference>
<dbReference type="EMBL" id="U80055">
    <property type="protein sequence ID" value="AAB58352.1"/>
    <property type="molecule type" value="Genomic_DNA"/>
</dbReference>
<dbReference type="EMBL" id="U60232">
    <property type="protein sequence ID" value="AAB58352.1"/>
    <property type="status" value="JOINED"/>
    <property type="molecule type" value="Genomic_DNA"/>
</dbReference>
<dbReference type="EMBL" id="U78979">
    <property type="protein sequence ID" value="AAB58352.1"/>
    <property type="status" value="JOINED"/>
    <property type="molecule type" value="Genomic_DNA"/>
</dbReference>
<dbReference type="EMBL" id="CR536540">
    <property type="protein sequence ID" value="CAG38777.1"/>
    <property type="molecule type" value="mRNA"/>
</dbReference>
<dbReference type="EMBL" id="CH471086">
    <property type="protein sequence ID" value="EAW48957.1"/>
    <property type="molecule type" value="Genomic_DNA"/>
</dbReference>
<dbReference type="EMBL" id="BC024241">
    <property type="protein sequence ID" value="AAH24241.1"/>
    <property type="molecule type" value="mRNA"/>
</dbReference>
<dbReference type="CCDS" id="CCDS4121.1"/>
<dbReference type="PIR" id="S50192">
    <property type="entry name" value="S50192"/>
</dbReference>
<dbReference type="RefSeq" id="NP_001310494.1">
    <property type="nucleotide sequence ID" value="NM_001323565.1"/>
</dbReference>
<dbReference type="RefSeq" id="NP_001310495.1">
    <property type="nucleotide sequence ID" value="NM_001323566.1"/>
</dbReference>
<dbReference type="RefSeq" id="NP_001310496.1">
    <property type="nucleotide sequence ID" value="NM_001323567.1"/>
</dbReference>
<dbReference type="RefSeq" id="NP_001792.2">
    <property type="nucleotide sequence ID" value="NM_001801.3"/>
</dbReference>
<dbReference type="PDB" id="2IC1">
    <property type="method" value="X-ray"/>
    <property type="resolution" value="2.70 A"/>
    <property type="chains" value="A=1-200"/>
</dbReference>
<dbReference type="PDB" id="6BGF">
    <property type="method" value="X-ray"/>
    <property type="resolution" value="2.25 A"/>
    <property type="chains" value="A=2-200"/>
</dbReference>
<dbReference type="PDB" id="6BGM">
    <property type="method" value="X-ray"/>
    <property type="resolution" value="2.21 A"/>
    <property type="chains" value="A=2-200"/>
</dbReference>
<dbReference type="PDB" id="6BPR">
    <property type="method" value="X-ray"/>
    <property type="resolution" value="1.96 A"/>
    <property type="chains" value="A=2-200"/>
</dbReference>
<dbReference type="PDB" id="6BPS">
    <property type="method" value="X-ray"/>
    <property type="resolution" value="2.10 A"/>
    <property type="chains" value="A=2-200"/>
</dbReference>
<dbReference type="PDB" id="6BPT">
    <property type="method" value="X-ray"/>
    <property type="resolution" value="2.40 A"/>
    <property type="chains" value="A=2-200"/>
</dbReference>
<dbReference type="PDB" id="6BPU">
    <property type="method" value="X-ray"/>
    <property type="resolution" value="1.80 A"/>
    <property type="chains" value="A=2-200"/>
</dbReference>
<dbReference type="PDB" id="6BPV">
    <property type="method" value="X-ray"/>
    <property type="resolution" value="1.95 A"/>
    <property type="chains" value="A=2-200"/>
</dbReference>
<dbReference type="PDB" id="6BPW">
    <property type="method" value="X-ray"/>
    <property type="resolution" value="2.43 A"/>
    <property type="chains" value="A=2-200"/>
</dbReference>
<dbReference type="PDB" id="6BPX">
    <property type="method" value="X-ray"/>
    <property type="resolution" value="2.15 A"/>
    <property type="chains" value="A=2-200"/>
</dbReference>
<dbReference type="PDB" id="6CDH">
    <property type="method" value="X-ray"/>
    <property type="resolution" value="1.82 A"/>
    <property type="chains" value="A=2-200"/>
</dbReference>
<dbReference type="PDB" id="6CDN">
    <property type="method" value="X-ray"/>
    <property type="resolution" value="2.06 A"/>
    <property type="chains" value="A=2-200"/>
</dbReference>
<dbReference type="PDB" id="6E87">
    <property type="method" value="X-ray"/>
    <property type="resolution" value="1.95 A"/>
    <property type="chains" value="A=2-200"/>
</dbReference>
<dbReference type="PDB" id="6N42">
    <property type="method" value="X-ray"/>
    <property type="resolution" value="2.20 A"/>
    <property type="chains" value="A=2-200"/>
</dbReference>
<dbReference type="PDB" id="6N43">
    <property type="method" value="X-ray"/>
    <property type="resolution" value="2.29 A"/>
    <property type="chains" value="A=2-200"/>
</dbReference>
<dbReference type="PDB" id="8VL9">
    <property type="method" value="X-ray"/>
    <property type="resolution" value="2.50 A"/>
    <property type="chains" value="D=1-200"/>
</dbReference>
<dbReference type="PDB" id="8VLB">
    <property type="method" value="X-ray"/>
    <property type="resolution" value="2.90 A"/>
    <property type="chains" value="D=1-200"/>
</dbReference>
<dbReference type="PDBsum" id="2IC1"/>
<dbReference type="PDBsum" id="6BGF"/>
<dbReference type="PDBsum" id="6BGM"/>
<dbReference type="PDBsum" id="6BPR"/>
<dbReference type="PDBsum" id="6BPS"/>
<dbReference type="PDBsum" id="6BPT"/>
<dbReference type="PDBsum" id="6BPU"/>
<dbReference type="PDBsum" id="6BPV"/>
<dbReference type="PDBsum" id="6BPW"/>
<dbReference type="PDBsum" id="6BPX"/>
<dbReference type="PDBsum" id="6CDH"/>
<dbReference type="PDBsum" id="6CDN"/>
<dbReference type="PDBsum" id="6E87"/>
<dbReference type="PDBsum" id="6N42"/>
<dbReference type="PDBsum" id="6N43"/>
<dbReference type="PDBsum" id="8VL9"/>
<dbReference type="PDBsum" id="8VLB"/>
<dbReference type="SMR" id="Q16878"/>
<dbReference type="BioGRID" id="107468">
    <property type="interactions" value="14"/>
</dbReference>
<dbReference type="FunCoup" id="Q16878">
    <property type="interactions" value="496"/>
</dbReference>
<dbReference type="IntAct" id="Q16878">
    <property type="interactions" value="9"/>
</dbReference>
<dbReference type="STRING" id="9606.ENSP00000250535"/>
<dbReference type="DrugBank" id="DB04339">
    <property type="generic name" value="Carbocisteine"/>
</dbReference>
<dbReference type="DrugBank" id="DB00151">
    <property type="generic name" value="Cysteine"/>
</dbReference>
<dbReference type="DrugBank" id="DB00157">
    <property type="generic name" value="NADH"/>
</dbReference>
<dbReference type="iPTMnet" id="Q16878"/>
<dbReference type="PhosphoSitePlus" id="Q16878"/>
<dbReference type="BioMuta" id="CDO1"/>
<dbReference type="DMDM" id="76800649"/>
<dbReference type="jPOST" id="Q16878"/>
<dbReference type="MassIVE" id="Q16878"/>
<dbReference type="PaxDb" id="9606-ENSP00000250535"/>
<dbReference type="PeptideAtlas" id="Q16878"/>
<dbReference type="ProteomicsDB" id="61117"/>
<dbReference type="Antibodypedia" id="25433">
    <property type="antibodies" value="168 antibodies from 29 providers"/>
</dbReference>
<dbReference type="DNASU" id="1036"/>
<dbReference type="Ensembl" id="ENST00000250535.5">
    <property type="protein sequence ID" value="ENSP00000250535.4"/>
    <property type="gene ID" value="ENSG00000129596.5"/>
</dbReference>
<dbReference type="GeneID" id="1036"/>
<dbReference type="KEGG" id="hsa:1036"/>
<dbReference type="MANE-Select" id="ENST00000250535.5">
    <property type="protein sequence ID" value="ENSP00000250535.4"/>
    <property type="RefSeq nucleotide sequence ID" value="NM_001801.3"/>
    <property type="RefSeq protein sequence ID" value="NP_001792.2"/>
</dbReference>
<dbReference type="UCSC" id="uc003krg.4">
    <property type="organism name" value="human"/>
</dbReference>
<dbReference type="AGR" id="HGNC:1795"/>
<dbReference type="CTD" id="1036"/>
<dbReference type="DisGeNET" id="1036"/>
<dbReference type="GeneCards" id="CDO1"/>
<dbReference type="HGNC" id="HGNC:1795">
    <property type="gene designation" value="CDO1"/>
</dbReference>
<dbReference type="HPA" id="ENSG00000129596">
    <property type="expression patterns" value="Tissue enhanced (choroid plexus, liver)"/>
</dbReference>
<dbReference type="MIM" id="603943">
    <property type="type" value="gene"/>
</dbReference>
<dbReference type="neXtProt" id="NX_Q16878"/>
<dbReference type="OpenTargets" id="ENSG00000129596"/>
<dbReference type="PharmGKB" id="PA26327"/>
<dbReference type="VEuPathDB" id="HostDB:ENSG00000129596"/>
<dbReference type="eggNOG" id="KOG4064">
    <property type="taxonomic scope" value="Eukaryota"/>
</dbReference>
<dbReference type="GeneTree" id="ENSGT00390000018226"/>
<dbReference type="HOGENOM" id="CLU_079443_1_0_1"/>
<dbReference type="InParanoid" id="Q16878"/>
<dbReference type="OMA" id="YTENQVT"/>
<dbReference type="OrthoDB" id="543511at2759"/>
<dbReference type="PAN-GO" id="Q16878">
    <property type="GO annotations" value="3 GO annotations based on evolutionary models"/>
</dbReference>
<dbReference type="PhylomeDB" id="Q16878"/>
<dbReference type="TreeFam" id="TF105636"/>
<dbReference type="BioCyc" id="MetaCyc:HS05299-MONOMER"/>
<dbReference type="BRENDA" id="1.13.11.20">
    <property type="organism ID" value="2681"/>
</dbReference>
<dbReference type="PathwayCommons" id="Q16878"/>
<dbReference type="Reactome" id="R-HSA-1614558">
    <property type="pathway name" value="Degradation of cysteine and homocysteine"/>
</dbReference>
<dbReference type="SignaLink" id="Q16878"/>
<dbReference type="SIGNOR" id="Q16878"/>
<dbReference type="UniPathway" id="UPA00012">
    <property type="reaction ID" value="UER00537"/>
</dbReference>
<dbReference type="BioGRID-ORCS" id="1036">
    <property type="hits" value="14 hits in 1153 CRISPR screens"/>
</dbReference>
<dbReference type="ChiTaRS" id="CDO1">
    <property type="organism name" value="human"/>
</dbReference>
<dbReference type="EvolutionaryTrace" id="Q16878"/>
<dbReference type="GenomeRNAi" id="1036"/>
<dbReference type="Pharos" id="Q16878">
    <property type="development level" value="Tbio"/>
</dbReference>
<dbReference type="PRO" id="PR:Q16878"/>
<dbReference type="Proteomes" id="UP000005640">
    <property type="component" value="Chromosome 5"/>
</dbReference>
<dbReference type="RNAct" id="Q16878">
    <property type="molecule type" value="protein"/>
</dbReference>
<dbReference type="Bgee" id="ENSG00000129596">
    <property type="expression patterns" value="Expressed in calcaneal tendon and 180 other cell types or tissues"/>
</dbReference>
<dbReference type="GO" id="GO:0005829">
    <property type="term" value="C:cytosol"/>
    <property type="evidence" value="ECO:0000304"/>
    <property type="project" value="UniProtKB"/>
</dbReference>
<dbReference type="GO" id="GO:0017172">
    <property type="term" value="F:cysteine dioxygenase activity"/>
    <property type="evidence" value="ECO:0000314"/>
    <property type="project" value="UniProtKB"/>
</dbReference>
<dbReference type="GO" id="GO:0008198">
    <property type="term" value="F:ferrous iron binding"/>
    <property type="evidence" value="ECO:0000314"/>
    <property type="project" value="UniProtKB"/>
</dbReference>
<dbReference type="GO" id="GO:0016151">
    <property type="term" value="F:nickel cation binding"/>
    <property type="evidence" value="ECO:0000250"/>
    <property type="project" value="UniProtKB"/>
</dbReference>
<dbReference type="GO" id="GO:0008270">
    <property type="term" value="F:zinc ion binding"/>
    <property type="evidence" value="ECO:0000314"/>
    <property type="project" value="UniProtKB"/>
</dbReference>
<dbReference type="GO" id="GO:0006534">
    <property type="term" value="P:cysteine metabolic process"/>
    <property type="evidence" value="ECO:0000304"/>
    <property type="project" value="UniProtKB"/>
</dbReference>
<dbReference type="GO" id="GO:0006954">
    <property type="term" value="P:inflammatory response"/>
    <property type="evidence" value="ECO:0000304"/>
    <property type="project" value="UniProtKB"/>
</dbReference>
<dbReference type="GO" id="GO:0019448">
    <property type="term" value="P:L-cysteine catabolic process"/>
    <property type="evidence" value="ECO:0000318"/>
    <property type="project" value="GO_Central"/>
</dbReference>
<dbReference type="GO" id="GO:0007595">
    <property type="term" value="P:lactation"/>
    <property type="evidence" value="ECO:0007669"/>
    <property type="project" value="Ensembl"/>
</dbReference>
<dbReference type="GO" id="GO:0043200">
    <property type="term" value="P:response to amino acid"/>
    <property type="evidence" value="ECO:0007669"/>
    <property type="project" value="Ensembl"/>
</dbReference>
<dbReference type="GO" id="GO:0097184">
    <property type="term" value="P:response to azide"/>
    <property type="evidence" value="ECO:0007669"/>
    <property type="project" value="Ensembl"/>
</dbReference>
<dbReference type="GO" id="GO:0051591">
    <property type="term" value="P:response to cAMP"/>
    <property type="evidence" value="ECO:0007669"/>
    <property type="project" value="Ensembl"/>
</dbReference>
<dbReference type="GO" id="GO:0045471">
    <property type="term" value="P:response to ethanol"/>
    <property type="evidence" value="ECO:0007669"/>
    <property type="project" value="Ensembl"/>
</dbReference>
<dbReference type="GO" id="GO:0033762">
    <property type="term" value="P:response to glucagon"/>
    <property type="evidence" value="ECO:0007669"/>
    <property type="project" value="Ensembl"/>
</dbReference>
<dbReference type="GO" id="GO:0051384">
    <property type="term" value="P:response to glucocorticoid"/>
    <property type="evidence" value="ECO:0007669"/>
    <property type="project" value="Ensembl"/>
</dbReference>
<dbReference type="GO" id="GO:0000097">
    <property type="term" value="P:sulfur amino acid biosynthetic process"/>
    <property type="evidence" value="ECO:0000304"/>
    <property type="project" value="UniProtKB"/>
</dbReference>
<dbReference type="GO" id="GO:0042412">
    <property type="term" value="P:taurine biosynthetic process"/>
    <property type="evidence" value="ECO:0000304"/>
    <property type="project" value="UniProtKB"/>
</dbReference>
<dbReference type="CDD" id="cd10548">
    <property type="entry name" value="cupin_CDO"/>
    <property type="match status" value="1"/>
</dbReference>
<dbReference type="FunFam" id="2.60.120.10:FF:000045">
    <property type="entry name" value="Cysteine dioxygenase 1"/>
    <property type="match status" value="1"/>
</dbReference>
<dbReference type="Gene3D" id="2.60.120.10">
    <property type="entry name" value="Jelly Rolls"/>
    <property type="match status" value="1"/>
</dbReference>
<dbReference type="InterPro" id="IPR010300">
    <property type="entry name" value="CDO_1"/>
</dbReference>
<dbReference type="InterPro" id="IPR014710">
    <property type="entry name" value="RmlC-like_jellyroll"/>
</dbReference>
<dbReference type="InterPro" id="IPR011051">
    <property type="entry name" value="RmlC_Cupin_sf"/>
</dbReference>
<dbReference type="PANTHER" id="PTHR12918">
    <property type="entry name" value="CYSTEINE DIOXYGENASE"/>
    <property type="match status" value="1"/>
</dbReference>
<dbReference type="PANTHER" id="PTHR12918:SF1">
    <property type="entry name" value="CYSTEINE DIOXYGENASE TYPE 1"/>
    <property type="match status" value="1"/>
</dbReference>
<dbReference type="Pfam" id="PF05995">
    <property type="entry name" value="CDO_I"/>
    <property type="match status" value="1"/>
</dbReference>
<dbReference type="SUPFAM" id="SSF51182">
    <property type="entry name" value="RmlC-like cupins"/>
    <property type="match status" value="1"/>
</dbReference>
<proteinExistence type="evidence at protein level"/>
<keyword id="KW-0002">3D-structure</keyword>
<keyword id="KW-0223">Dioxygenase</keyword>
<keyword id="KW-0408">Iron</keyword>
<keyword id="KW-0479">Metal-binding</keyword>
<keyword id="KW-0560">Oxidoreductase</keyword>
<keyword id="KW-1267">Proteomics identification</keyword>
<keyword id="KW-1185">Reference proteome</keyword>
<keyword id="KW-0883">Thioether bond</keyword>
<protein>
    <recommendedName>
        <fullName>Cysteine dioxygenase type 1</fullName>
        <ecNumber evidence="4">1.13.11.20</ecNumber>
    </recommendedName>
    <alternativeName>
        <fullName>Cysteine dioxygenase type I</fullName>
        <shortName>CDO</shortName>
        <shortName>CDO-I</shortName>
    </alternativeName>
</protein>
<evidence type="ECO:0000250" key="1">
    <source>
        <dbReference type="UniProtKB" id="P60334"/>
    </source>
</evidence>
<evidence type="ECO:0000269" key="2">
    <source>
    </source>
</evidence>
<evidence type="ECO:0000269" key="3">
    <source>
    </source>
</evidence>
<evidence type="ECO:0000269" key="4">
    <source>
    </source>
</evidence>
<evidence type="ECO:0000269" key="5">
    <source>
    </source>
</evidence>
<evidence type="ECO:0000269" key="6">
    <source>
    </source>
</evidence>
<evidence type="ECO:0000305" key="7"/>
<evidence type="ECO:0000305" key="8">
    <source>
    </source>
</evidence>
<evidence type="ECO:0007829" key="9">
    <source>
        <dbReference type="PDB" id="6BPU"/>
    </source>
</evidence>
<feature type="chain" id="PRO_0000206606" description="Cysteine dioxygenase type 1">
    <location>
        <begin position="1"/>
        <end position="200"/>
    </location>
</feature>
<feature type="binding site" evidence="4">
    <location>
        <position position="86"/>
    </location>
    <ligand>
        <name>Fe cation</name>
        <dbReference type="ChEBI" id="CHEBI:24875"/>
        <note>catalytic</note>
    </ligand>
</feature>
<feature type="binding site" evidence="4">
    <location>
        <position position="88"/>
    </location>
    <ligand>
        <name>Fe cation</name>
        <dbReference type="ChEBI" id="CHEBI:24875"/>
        <note>catalytic</note>
    </ligand>
</feature>
<feature type="binding site" evidence="4">
    <location>
        <position position="140"/>
    </location>
    <ligand>
        <name>Fe cation</name>
        <dbReference type="ChEBI" id="CHEBI:24875"/>
        <note>catalytic</note>
    </ligand>
</feature>
<feature type="cross-link" description="3'-(S-cysteinyl)-tyrosine (Cys-Tyr)" evidence="4">
    <location>
        <begin position="93"/>
        <end position="157"/>
    </location>
</feature>
<feature type="sequence variant" id="VAR_023536" description="In dbSNP:rs1042867." evidence="5 6">
    <original>T</original>
    <variation>I</variation>
    <location>
        <position position="45"/>
    </location>
</feature>
<feature type="sequence variant" id="VAR_036170" description="In a colorectal cancer sample; somatic mutation." evidence="3">
    <original>E</original>
    <variation>Q</variation>
    <location>
        <position position="143"/>
    </location>
</feature>
<feature type="mutagenesis site" description="Reduces enzyme activity by 70%. Reduces iron and zinc incorporation by 50%." evidence="4">
    <original>R</original>
    <variation>Q</variation>
    <location>
        <position position="60"/>
    </location>
</feature>
<feature type="mutagenesis site" description="Reduces enzyme activity and iron incorporation by 50%. Zinc incorporation increased by 20%." evidence="4">
    <original>C</original>
    <variation>S</variation>
    <location>
        <position position="93"/>
    </location>
</feature>
<feature type="mutagenesis site" description="Almost total loss of enzyme activity and iron incorporation. Reduces zinc incorporation by 20%." evidence="4">
    <original>Y</original>
    <variation>F</variation>
    <location>
        <position position="157"/>
    </location>
</feature>
<feature type="mutagenesis site" description="Reduces enzyme activity by 20%. Little effect on iron incorporation. No effect on zinc incorporation." evidence="4">
    <original>C</original>
    <variation>S</variation>
    <location>
        <position position="164"/>
    </location>
</feature>
<feature type="sequence conflict" description="In Ref. 7; AAH24241." evidence="7" ref="7">
    <original>I</original>
    <variation>V</variation>
    <location>
        <position position="137"/>
    </location>
</feature>
<feature type="helix" evidence="9">
    <location>
        <begin position="12"/>
        <end position="22"/>
    </location>
</feature>
<feature type="strand" evidence="9">
    <location>
        <begin position="24"/>
        <end position="26"/>
    </location>
</feature>
<feature type="helix" evidence="9">
    <location>
        <begin position="30"/>
        <end position="39"/>
    </location>
</feature>
<feature type="helix" evidence="9">
    <location>
        <begin position="44"/>
        <end position="47"/>
    </location>
</feature>
<feature type="helix" evidence="9">
    <location>
        <begin position="48"/>
        <end position="50"/>
    </location>
</feature>
<feature type="strand" evidence="9">
    <location>
        <begin position="55"/>
        <end position="57"/>
    </location>
</feature>
<feature type="strand" evidence="9">
    <location>
        <begin position="59"/>
        <end position="64"/>
    </location>
</feature>
<feature type="helix" evidence="9">
    <location>
        <begin position="66"/>
        <end position="68"/>
    </location>
</feature>
<feature type="strand" evidence="9">
    <location>
        <begin position="72"/>
        <end position="77"/>
    </location>
</feature>
<feature type="strand" evidence="9">
    <location>
        <begin position="93"/>
        <end position="100"/>
    </location>
</feature>
<feature type="strand" evidence="9">
    <location>
        <begin position="102"/>
        <end position="107"/>
    </location>
</feature>
<feature type="strand" evidence="9">
    <location>
        <begin position="119"/>
        <end position="124"/>
    </location>
</feature>
<feature type="strand" evidence="9">
    <location>
        <begin position="130"/>
        <end position="133"/>
    </location>
</feature>
<feature type="turn" evidence="9">
    <location>
        <begin position="135"/>
        <end position="137"/>
    </location>
</feature>
<feature type="strand" evidence="9">
    <location>
        <begin position="139"/>
        <end position="145"/>
    </location>
</feature>
<feature type="strand" evidence="9">
    <location>
        <begin position="147"/>
        <end position="149"/>
    </location>
</feature>
<feature type="strand" evidence="9">
    <location>
        <begin position="151"/>
        <end position="156"/>
    </location>
</feature>
<feature type="strand" evidence="9">
    <location>
        <begin position="162"/>
        <end position="167"/>
    </location>
</feature>
<feature type="turn" evidence="9">
    <location>
        <begin position="169"/>
        <end position="171"/>
    </location>
</feature>
<feature type="strand" evidence="9">
    <location>
        <begin position="174"/>
        <end position="178"/>
    </location>
</feature>
<feature type="strand" evidence="9">
    <location>
        <begin position="182"/>
        <end position="184"/>
    </location>
</feature>
<organism>
    <name type="scientific">Homo sapiens</name>
    <name type="common">Human</name>
    <dbReference type="NCBI Taxonomy" id="9606"/>
    <lineage>
        <taxon>Eukaryota</taxon>
        <taxon>Metazoa</taxon>
        <taxon>Chordata</taxon>
        <taxon>Craniata</taxon>
        <taxon>Vertebrata</taxon>
        <taxon>Euteleostomi</taxon>
        <taxon>Mammalia</taxon>
        <taxon>Eutheria</taxon>
        <taxon>Euarchontoglires</taxon>
        <taxon>Primates</taxon>
        <taxon>Haplorrhini</taxon>
        <taxon>Catarrhini</taxon>
        <taxon>Hominidae</taxon>
        <taxon>Homo</taxon>
    </lineage>
</organism>
<sequence length="200" mass="22972">MEQTEVLKPRTLADLIRILHQLFAGDEVNVEEVQAIMEAYESDPTEWAMYAKFDQYRYTRNLVDQGNGKFNLMILCWGEGHGSSIHDHTNSHCFLKMLQGNLKETLFAWPDKKSNEMVKKSERVLRENQCAYINDSIGLHRVENISHTEPAVSLHLYSPPFDTCHAFDQRTGHKNKVTMTFHSKFGIRTPNATSGSLENN</sequence>
<gene>
    <name type="primary">CDO1</name>
</gene>
<accession>Q16878</accession>
<accession>B2RAK4</accession>
<accession>P78513</accession>
<accession>Q6FHZ8</accession>
<accession>Q8TB64</accession>
<reference key="1">
    <citation type="journal article" date="1994" name="Biochim. Biophys. Acta">
        <title>Human cysteine dioxygenase type I: primary structure derived from base sequencing of cDNA.</title>
        <authorList>
            <person name="McCann K.P."/>
            <person name="Akbari M.T."/>
            <person name="Williams A.C."/>
            <person name="Ramsden D.B."/>
        </authorList>
    </citation>
    <scope>NUCLEOTIDE SEQUENCE [MRNA]</scope>
    <scope>VARIANT ILE-45</scope>
    <source>
        <tissue>Liver</tissue>
    </source>
</reference>
<reference key="2">
    <citation type="journal article" date="1999" name="Biosci. Biotechnol. Biochem.">
        <title>Human cysteine dioxygenase gene: structural organization, tissue-specific expression and downregulation by phorbol 12-myristate 13-acetate.</title>
        <authorList>
            <person name="Tsuboyama-Kasaoka N."/>
            <person name="Hosokawa Y."/>
            <person name="Kodama H."/>
            <person name="Matsumoto A."/>
            <person name="Oka J."/>
            <person name="Totani M."/>
        </authorList>
    </citation>
    <scope>NUCLEOTIDE SEQUENCE [GENOMIC DNA]</scope>
    <scope>INDUCTION</scope>
    <scope>TISSUE SPECIFICITY</scope>
    <source>
        <tissue>Liver</tissue>
    </source>
</reference>
<reference key="3">
    <citation type="journal article" date="1997" name="Mol. Pathol.">
        <title>Human cysteine dioxygenase type I (CDO-I; EC 1.13.11.20): 5' flanking region and intron-exon structure of the gene.</title>
        <authorList>
            <person name="Ramsden D.B."/>
            <person name="Kapadi A.L."/>
            <person name="Fitch N.J."/>
            <person name="Farmer M.J."/>
            <person name="Bennett P."/>
            <person name="Williams A.C."/>
        </authorList>
    </citation>
    <scope>NUCLEOTIDE SEQUENCE [GENOMIC DNA]</scope>
    <scope>VARIANT ILE-45</scope>
</reference>
<reference key="4">
    <citation type="submission" date="2004-06" db="EMBL/GenBank/DDBJ databases">
        <title>Cloning of human full open reading frames in Gateway(TM) system entry vector (pDONR201).</title>
        <authorList>
            <person name="Halleck A."/>
            <person name="Ebert L."/>
            <person name="Mkoundinya M."/>
            <person name="Schick M."/>
            <person name="Eisenstein S."/>
            <person name="Neubert P."/>
            <person name="Kstrang K."/>
            <person name="Schatten R."/>
            <person name="Shen B."/>
            <person name="Henze S."/>
            <person name="Mar W."/>
            <person name="Korn B."/>
            <person name="Zuo D."/>
            <person name="Hu Y."/>
            <person name="LaBaer J."/>
        </authorList>
    </citation>
    <scope>NUCLEOTIDE SEQUENCE [LARGE SCALE MRNA]</scope>
</reference>
<reference key="5">
    <citation type="journal article" date="2004" name="Nat. Genet.">
        <title>Complete sequencing and characterization of 21,243 full-length human cDNAs.</title>
        <authorList>
            <person name="Ota T."/>
            <person name="Suzuki Y."/>
            <person name="Nishikawa T."/>
            <person name="Otsuki T."/>
            <person name="Sugiyama T."/>
            <person name="Irie R."/>
            <person name="Wakamatsu A."/>
            <person name="Hayashi K."/>
            <person name="Sato H."/>
            <person name="Nagai K."/>
            <person name="Kimura K."/>
            <person name="Makita H."/>
            <person name="Sekine M."/>
            <person name="Obayashi M."/>
            <person name="Nishi T."/>
            <person name="Shibahara T."/>
            <person name="Tanaka T."/>
            <person name="Ishii S."/>
            <person name="Yamamoto J."/>
            <person name="Saito K."/>
            <person name="Kawai Y."/>
            <person name="Isono Y."/>
            <person name="Nakamura Y."/>
            <person name="Nagahari K."/>
            <person name="Murakami K."/>
            <person name="Yasuda T."/>
            <person name="Iwayanagi T."/>
            <person name="Wagatsuma M."/>
            <person name="Shiratori A."/>
            <person name="Sudo H."/>
            <person name="Hosoiri T."/>
            <person name="Kaku Y."/>
            <person name="Kodaira H."/>
            <person name="Kondo H."/>
            <person name="Sugawara M."/>
            <person name="Takahashi M."/>
            <person name="Kanda K."/>
            <person name="Yokoi T."/>
            <person name="Furuya T."/>
            <person name="Kikkawa E."/>
            <person name="Omura Y."/>
            <person name="Abe K."/>
            <person name="Kamihara K."/>
            <person name="Katsuta N."/>
            <person name="Sato K."/>
            <person name="Tanikawa M."/>
            <person name="Yamazaki M."/>
            <person name="Ninomiya K."/>
            <person name="Ishibashi T."/>
            <person name="Yamashita H."/>
            <person name="Murakawa K."/>
            <person name="Fujimori K."/>
            <person name="Tanai H."/>
            <person name="Kimata M."/>
            <person name="Watanabe M."/>
            <person name="Hiraoka S."/>
            <person name="Chiba Y."/>
            <person name="Ishida S."/>
            <person name="Ono Y."/>
            <person name="Takiguchi S."/>
            <person name="Watanabe S."/>
            <person name="Yosida M."/>
            <person name="Hotuta T."/>
            <person name="Kusano J."/>
            <person name="Kanehori K."/>
            <person name="Takahashi-Fujii A."/>
            <person name="Hara H."/>
            <person name="Tanase T.-O."/>
            <person name="Nomura Y."/>
            <person name="Togiya S."/>
            <person name="Komai F."/>
            <person name="Hara R."/>
            <person name="Takeuchi K."/>
            <person name="Arita M."/>
            <person name="Imose N."/>
            <person name="Musashino K."/>
            <person name="Yuuki H."/>
            <person name="Oshima A."/>
            <person name="Sasaki N."/>
            <person name="Aotsuka S."/>
            <person name="Yoshikawa Y."/>
            <person name="Matsunawa H."/>
            <person name="Ichihara T."/>
            <person name="Shiohata N."/>
            <person name="Sano S."/>
            <person name="Moriya S."/>
            <person name="Momiyama H."/>
            <person name="Satoh N."/>
            <person name="Takami S."/>
            <person name="Terashima Y."/>
            <person name="Suzuki O."/>
            <person name="Nakagawa S."/>
            <person name="Senoh A."/>
            <person name="Mizoguchi H."/>
            <person name="Goto Y."/>
            <person name="Shimizu F."/>
            <person name="Wakebe H."/>
            <person name="Hishigaki H."/>
            <person name="Watanabe T."/>
            <person name="Sugiyama A."/>
            <person name="Takemoto M."/>
            <person name="Kawakami B."/>
            <person name="Yamazaki M."/>
            <person name="Watanabe K."/>
            <person name="Kumagai A."/>
            <person name="Itakura S."/>
            <person name="Fukuzumi Y."/>
            <person name="Fujimori Y."/>
            <person name="Komiyama M."/>
            <person name="Tashiro H."/>
            <person name="Tanigami A."/>
            <person name="Fujiwara T."/>
            <person name="Ono T."/>
            <person name="Yamada K."/>
            <person name="Fujii Y."/>
            <person name="Ozaki K."/>
            <person name="Hirao M."/>
            <person name="Ohmori Y."/>
            <person name="Kawabata A."/>
            <person name="Hikiji T."/>
            <person name="Kobatake N."/>
            <person name="Inagaki H."/>
            <person name="Ikema Y."/>
            <person name="Okamoto S."/>
            <person name="Okitani R."/>
            <person name="Kawakami T."/>
            <person name="Noguchi S."/>
            <person name="Itoh T."/>
            <person name="Shigeta K."/>
            <person name="Senba T."/>
            <person name="Matsumura K."/>
            <person name="Nakajima Y."/>
            <person name="Mizuno T."/>
            <person name="Morinaga M."/>
            <person name="Sasaki M."/>
            <person name="Togashi T."/>
            <person name="Oyama M."/>
            <person name="Hata H."/>
            <person name="Watanabe M."/>
            <person name="Komatsu T."/>
            <person name="Mizushima-Sugano J."/>
            <person name="Satoh T."/>
            <person name="Shirai Y."/>
            <person name="Takahashi Y."/>
            <person name="Nakagawa K."/>
            <person name="Okumura K."/>
            <person name="Nagase T."/>
            <person name="Nomura N."/>
            <person name="Kikuchi H."/>
            <person name="Masuho Y."/>
            <person name="Yamashita R."/>
            <person name="Nakai K."/>
            <person name="Yada T."/>
            <person name="Nakamura Y."/>
            <person name="Ohara O."/>
            <person name="Isogai T."/>
            <person name="Sugano S."/>
        </authorList>
    </citation>
    <scope>NUCLEOTIDE SEQUENCE [LARGE SCALE MRNA]</scope>
    <source>
        <tissue>Liver</tissue>
    </source>
</reference>
<reference key="6">
    <citation type="submission" date="2005-09" db="EMBL/GenBank/DDBJ databases">
        <authorList>
            <person name="Mural R.J."/>
            <person name="Istrail S."/>
            <person name="Sutton G.G."/>
            <person name="Florea L."/>
            <person name="Halpern A.L."/>
            <person name="Mobarry C.M."/>
            <person name="Lippert R."/>
            <person name="Walenz B."/>
            <person name="Shatkay H."/>
            <person name="Dew I."/>
            <person name="Miller J.R."/>
            <person name="Flanigan M.J."/>
            <person name="Edwards N.J."/>
            <person name="Bolanos R."/>
            <person name="Fasulo D."/>
            <person name="Halldorsson B.V."/>
            <person name="Hannenhalli S."/>
            <person name="Turner R."/>
            <person name="Yooseph S."/>
            <person name="Lu F."/>
            <person name="Nusskern D.R."/>
            <person name="Shue B.C."/>
            <person name="Zheng X.H."/>
            <person name="Zhong F."/>
            <person name="Delcher A.L."/>
            <person name="Huson D.H."/>
            <person name="Kravitz S.A."/>
            <person name="Mouchard L."/>
            <person name="Reinert K."/>
            <person name="Remington K.A."/>
            <person name="Clark A.G."/>
            <person name="Waterman M.S."/>
            <person name="Eichler E.E."/>
            <person name="Adams M.D."/>
            <person name="Hunkapiller M.W."/>
            <person name="Myers E.W."/>
            <person name="Venter J.C."/>
        </authorList>
    </citation>
    <scope>NUCLEOTIDE SEQUENCE [LARGE SCALE GENOMIC DNA]</scope>
</reference>
<reference key="7">
    <citation type="journal article" date="2004" name="Genome Res.">
        <title>The status, quality, and expansion of the NIH full-length cDNA project: the Mammalian Gene Collection (MGC).</title>
        <authorList>
            <consortium name="The MGC Project Team"/>
        </authorList>
    </citation>
    <scope>NUCLEOTIDE SEQUENCE [LARGE SCALE MRNA]</scope>
    <source>
        <tissue>Brain</tissue>
    </source>
</reference>
<reference key="8">
    <citation type="journal article" date="2011" name="BMC Syst. Biol.">
        <title>Initial characterization of the human central proteome.</title>
        <authorList>
            <person name="Burkard T.R."/>
            <person name="Planyavsky M."/>
            <person name="Kaupe I."/>
            <person name="Breitwieser F.P."/>
            <person name="Buerckstuemmer T."/>
            <person name="Bennett K.L."/>
            <person name="Superti-Furga G."/>
            <person name="Colinge J."/>
        </authorList>
    </citation>
    <scope>IDENTIFICATION BY MASS SPECTROMETRY [LARGE SCALE ANALYSIS]</scope>
</reference>
<reference key="9">
    <citation type="journal article" date="2007" name="J. Biol. Chem.">
        <title>An insight into the mechanism of human cysteine dioxygenase. Key roles of the thioether-bonded tyrosine-cysteine cofactor.</title>
        <authorList>
            <person name="Ye S."/>
            <person name="Wu X."/>
            <person name="Wei L."/>
            <person name="Tang D."/>
            <person name="Sun P."/>
            <person name="Bartlam M."/>
            <person name="Rao Z."/>
        </authorList>
    </citation>
    <scope>X-RAY CRYSTALLOGRAPHY (2.7 ANGSTROMS) OF 2-200 OF WILD-TYPE AND MUTANTS ARG-60; CYS-93; TYR-157 AND CYS-164 IN COMPLEX WITH L-CYSTEINE AND DIVALENT METAL IONS</scope>
    <scope>CROSS-LINK</scope>
    <scope>SUBUNIT</scope>
    <scope>IDENTIFICATION BY MASS SPECTROMETRY</scope>
    <scope>FUNCTION</scope>
    <scope>COFACTOR</scope>
    <scope>CATALYTIC ACTIVITY</scope>
    <scope>BIOPHYSICOCHEMICAL PROPERTIES</scope>
    <scope>PTM</scope>
    <scope>MUTAGENESIS OF ARG-60; CYS-93; TYR-157 AND CYS-164</scope>
    <scope>IRON-BINDING SITES</scope>
</reference>
<reference key="10">
    <citation type="journal article" date="2006" name="Science">
        <title>The consensus coding sequences of human breast and colorectal cancers.</title>
        <authorList>
            <person name="Sjoeblom T."/>
            <person name="Jones S."/>
            <person name="Wood L.D."/>
            <person name="Parsons D.W."/>
            <person name="Lin J."/>
            <person name="Barber T.D."/>
            <person name="Mandelker D."/>
            <person name="Leary R.J."/>
            <person name="Ptak J."/>
            <person name="Silliman N."/>
            <person name="Szabo S."/>
            <person name="Buckhaults P."/>
            <person name="Farrell C."/>
            <person name="Meeh P."/>
            <person name="Markowitz S.D."/>
            <person name="Willis J."/>
            <person name="Dawson D."/>
            <person name="Willson J.K.V."/>
            <person name="Gazdar A.F."/>
            <person name="Hartigan J."/>
            <person name="Wu L."/>
            <person name="Liu C."/>
            <person name="Parmigiani G."/>
            <person name="Park B.H."/>
            <person name="Bachman K.E."/>
            <person name="Papadopoulos N."/>
            <person name="Vogelstein B."/>
            <person name="Kinzler K.W."/>
            <person name="Velculescu V.E."/>
        </authorList>
    </citation>
    <scope>VARIANT [LARGE SCALE ANALYSIS] GLN-143</scope>
</reference>